<feature type="signal peptide" evidence="4">
    <location>
        <begin position="1"/>
        <end position="22"/>
    </location>
</feature>
<feature type="chain" id="PRO_0000235194" description="Agouti-signaling protein">
    <location>
        <begin position="23"/>
        <end position="132"/>
    </location>
</feature>
<feature type="domain" description="Agouti" evidence="5">
    <location>
        <begin position="93"/>
        <end position="132"/>
    </location>
</feature>
<feature type="region of interest" description="Disordered" evidence="6">
    <location>
        <begin position="62"/>
        <end position="88"/>
    </location>
</feature>
<feature type="compositionally biased region" description="Basic and acidic residues" evidence="6">
    <location>
        <begin position="63"/>
        <end position="79"/>
    </location>
</feature>
<feature type="glycosylation site" description="N-linked (GlcNAc...) asparagine" evidence="4">
    <location>
        <position position="39"/>
    </location>
</feature>
<feature type="disulfide bond" evidence="5">
    <location>
        <begin position="93"/>
        <end position="108"/>
    </location>
</feature>
<feature type="disulfide bond" evidence="5">
    <location>
        <begin position="100"/>
        <end position="114"/>
    </location>
</feature>
<feature type="disulfide bond" evidence="5">
    <location>
        <begin position="107"/>
        <end position="125"/>
    </location>
</feature>
<feature type="disulfide bond" evidence="5">
    <location>
        <begin position="111"/>
        <end position="132"/>
    </location>
</feature>
<feature type="disulfide bond" evidence="5">
    <location>
        <begin position="116"/>
        <end position="123"/>
    </location>
</feature>
<evidence type="ECO:0000250" key="1"/>
<evidence type="ECO:0000250" key="2">
    <source>
        <dbReference type="UniProtKB" id="P42127"/>
    </source>
</evidence>
<evidence type="ECO:0000250" key="3">
    <source>
        <dbReference type="UniProtKB" id="Q03288"/>
    </source>
</evidence>
<evidence type="ECO:0000255" key="4"/>
<evidence type="ECO:0000255" key="5">
    <source>
        <dbReference type="PROSITE-ProRule" id="PRU00494"/>
    </source>
</evidence>
<evidence type="ECO:0000256" key="6">
    <source>
        <dbReference type="SAM" id="MobiDB-lite"/>
    </source>
</evidence>
<proteinExistence type="inferred from homology"/>
<sequence length="132" mass="14673">MDVTRLLLATLLVFLCFFTAYSHLPPEEKLRDDRSLRSNSSVNLLDFPSVSIVALNKKSKQISRKEAEKKRSSKKEASMKKVARPRTPLSAPCVATRDSCKPPAPACCDPCASCQCRFFRSACSCRVLSLNC</sequence>
<accession>Q1XGV0</accession>
<protein>
    <recommendedName>
        <fullName>Agouti-signaling protein</fullName>
        <shortName>ASP</shortName>
    </recommendedName>
    <alternativeName>
        <fullName>Agouti switch protein</fullName>
    </alternativeName>
</protein>
<comment type="function">
    <text evidence="3">Involved in the regulation of melanogenesis. The binding of ASP to MC1R precludes alpha-MSH initiated signaling and thus blocks production of cAMP, leading to a down-regulation of eumelanogenesis (brown/black pigment) and thus increasing synthesis of pheomelanin (yellow/red pigment) (By similarity).</text>
</comment>
<comment type="subcellular location">
    <subcellularLocation>
        <location evidence="2">Secreted</location>
    </subcellularLocation>
</comment>
<comment type="domain">
    <text evidence="1">The presence of a 'disulfide through disulfide knot' structurally defines this protein as a knottin.</text>
</comment>
<dbReference type="EMBL" id="AB236876">
    <property type="protein sequence ID" value="BAE93024.1"/>
    <property type="molecule type" value="Genomic_DNA"/>
</dbReference>
<dbReference type="GlyCosmos" id="Q1XGV0">
    <property type="glycosylation" value="1 site, No reported glycans"/>
</dbReference>
<dbReference type="GO" id="GO:0005615">
    <property type="term" value="C:extracellular space"/>
    <property type="evidence" value="ECO:0000250"/>
    <property type="project" value="UniProtKB"/>
</dbReference>
<dbReference type="GO" id="GO:0031779">
    <property type="term" value="F:melanocortin receptor binding"/>
    <property type="evidence" value="ECO:0007669"/>
    <property type="project" value="TreeGrafter"/>
</dbReference>
<dbReference type="GO" id="GO:0005184">
    <property type="term" value="F:neuropeptide hormone activity"/>
    <property type="evidence" value="ECO:0007669"/>
    <property type="project" value="TreeGrafter"/>
</dbReference>
<dbReference type="GO" id="GO:0009755">
    <property type="term" value="P:hormone-mediated signaling pathway"/>
    <property type="evidence" value="ECO:0007669"/>
    <property type="project" value="InterPro"/>
</dbReference>
<dbReference type="GO" id="GO:0042438">
    <property type="term" value="P:melanin biosynthetic process"/>
    <property type="evidence" value="ECO:0000250"/>
    <property type="project" value="UniProtKB"/>
</dbReference>
<dbReference type="GO" id="GO:0032438">
    <property type="term" value="P:melanosome organization"/>
    <property type="evidence" value="ECO:0007669"/>
    <property type="project" value="TreeGrafter"/>
</dbReference>
<dbReference type="FunFam" id="4.10.760.10:FF:000002">
    <property type="entry name" value="Agouti-signaling protein"/>
    <property type="match status" value="1"/>
</dbReference>
<dbReference type="Gene3D" id="4.10.760.10">
    <property type="entry name" value="Agouti domain"/>
    <property type="match status" value="1"/>
</dbReference>
<dbReference type="InterPro" id="IPR007733">
    <property type="entry name" value="Agouti"/>
</dbReference>
<dbReference type="InterPro" id="IPR027300">
    <property type="entry name" value="Agouti_dom"/>
</dbReference>
<dbReference type="InterPro" id="IPR036836">
    <property type="entry name" value="Agouti_dom_sf"/>
</dbReference>
<dbReference type="PANTHER" id="PTHR16551">
    <property type="entry name" value="AGOUTI RELATED"/>
    <property type="match status" value="1"/>
</dbReference>
<dbReference type="PANTHER" id="PTHR16551:SF1">
    <property type="entry name" value="AGOUTI-SIGNALING PROTEIN"/>
    <property type="match status" value="1"/>
</dbReference>
<dbReference type="Pfam" id="PF05039">
    <property type="entry name" value="Agouti"/>
    <property type="match status" value="1"/>
</dbReference>
<dbReference type="SMART" id="SM00792">
    <property type="entry name" value="Agouti"/>
    <property type="match status" value="1"/>
</dbReference>
<dbReference type="SUPFAM" id="SSF57055">
    <property type="entry name" value="Agouti-related protein"/>
    <property type="match status" value="1"/>
</dbReference>
<dbReference type="PROSITE" id="PS60024">
    <property type="entry name" value="AGOUTI_1"/>
    <property type="match status" value="1"/>
</dbReference>
<dbReference type="PROSITE" id="PS51150">
    <property type="entry name" value="AGOUTI_2"/>
    <property type="match status" value="1"/>
</dbReference>
<gene>
    <name type="primary">ASIP</name>
</gene>
<keyword id="KW-1015">Disulfide bond</keyword>
<keyword id="KW-0325">Glycoprotein</keyword>
<keyword id="KW-0960">Knottin</keyword>
<keyword id="KW-0964">Secreted</keyword>
<keyword id="KW-0732">Signal</keyword>
<organism>
    <name type="scientific">Erythrocebus patas</name>
    <name type="common">Red guenon</name>
    <name type="synonym">Cercopithecus patas</name>
    <dbReference type="NCBI Taxonomy" id="9538"/>
    <lineage>
        <taxon>Eukaryota</taxon>
        <taxon>Metazoa</taxon>
        <taxon>Chordata</taxon>
        <taxon>Craniata</taxon>
        <taxon>Vertebrata</taxon>
        <taxon>Euteleostomi</taxon>
        <taxon>Mammalia</taxon>
        <taxon>Eutheria</taxon>
        <taxon>Euarchontoglires</taxon>
        <taxon>Primates</taxon>
        <taxon>Haplorrhini</taxon>
        <taxon>Catarrhini</taxon>
        <taxon>Cercopithecidae</taxon>
        <taxon>Cercopithecinae</taxon>
        <taxon>Erythrocebus</taxon>
    </lineage>
</organism>
<reference key="1">
    <citation type="journal article" date="2006" name="Genome Res.">
        <title>Alu-mediated 100-kb deletion in the primate genome: the loss of the agouti signaling protein gene in the lesser apes.</title>
        <authorList>
            <person name="Nakayama K."/>
            <person name="Ishida T."/>
        </authorList>
    </citation>
    <scope>NUCLEOTIDE SEQUENCE [GENOMIC DNA]</scope>
</reference>
<name>ASIP_ERYPA</name>